<name>QUEF_BRUA4</name>
<sequence length="155" mass="17416">MSEKTIYSDLKQLGSNASIPQNPEDAILERVANPQAGTPYCVRFTAPEFTSLCPMTGQPDFAHLVIDYVPGQWLVESKSLKLFLFSFRNHGAFHEDCTVTIGKRLVELLEPEWLRIGGYWYPRGGIPIDVFFQTGAAPQNVWIPEQGVPNYRGRG</sequence>
<reference key="1">
    <citation type="journal article" date="2011" name="J. Bacteriol.">
        <title>Genome of Ochrobactrum anthropi ATCC 49188 T, a versatile opportunistic pathogen and symbiont of several eukaryotic hosts.</title>
        <authorList>
            <person name="Chain P.S."/>
            <person name="Lang D.M."/>
            <person name="Comerci D.J."/>
            <person name="Malfatti S.A."/>
            <person name="Vergez L.M."/>
            <person name="Shin M."/>
            <person name="Ugalde R.A."/>
            <person name="Garcia E."/>
            <person name="Tolmasky M.E."/>
        </authorList>
    </citation>
    <scope>NUCLEOTIDE SEQUENCE [LARGE SCALE GENOMIC DNA]</scope>
    <source>
        <strain>ATCC 49188 / DSM 6882 / CCUG 24695 / JCM 21032 / LMG 3331 / NBRC 15819 / NCTC 12168 / Alc 37</strain>
    </source>
</reference>
<proteinExistence type="inferred from homology"/>
<protein>
    <recommendedName>
        <fullName evidence="1">NADPH-dependent 7-cyano-7-deazaguanine reductase</fullName>
        <ecNumber evidence="1">1.7.1.13</ecNumber>
    </recommendedName>
    <alternativeName>
        <fullName evidence="1">7-cyano-7-carbaguanine reductase</fullName>
    </alternativeName>
    <alternativeName>
        <fullName evidence="1">NADPH-dependent nitrile oxidoreductase</fullName>
    </alternativeName>
    <alternativeName>
        <fullName evidence="1">PreQ(0) reductase</fullName>
    </alternativeName>
</protein>
<keyword id="KW-0963">Cytoplasm</keyword>
<keyword id="KW-0521">NADP</keyword>
<keyword id="KW-0560">Oxidoreductase</keyword>
<keyword id="KW-0671">Queuosine biosynthesis</keyword>
<keyword id="KW-1185">Reference proteome</keyword>
<organism>
    <name type="scientific">Brucella anthropi (strain ATCC 49188 / DSM 6882 / CCUG 24695 / JCM 21032 / LMG 3331 / NBRC 15819 / NCTC 12168 / Alc 37)</name>
    <name type="common">Ochrobactrum anthropi</name>
    <dbReference type="NCBI Taxonomy" id="439375"/>
    <lineage>
        <taxon>Bacteria</taxon>
        <taxon>Pseudomonadati</taxon>
        <taxon>Pseudomonadota</taxon>
        <taxon>Alphaproteobacteria</taxon>
        <taxon>Hyphomicrobiales</taxon>
        <taxon>Brucellaceae</taxon>
        <taxon>Brucella/Ochrobactrum group</taxon>
        <taxon>Brucella</taxon>
    </lineage>
</organism>
<comment type="function">
    <text evidence="1">Catalyzes the NADPH-dependent reduction of 7-cyano-7-deazaguanine (preQ0) to 7-aminomethyl-7-deazaguanine (preQ1).</text>
</comment>
<comment type="catalytic activity">
    <reaction evidence="1">
        <text>7-aminomethyl-7-carbaguanine + 2 NADP(+) = 7-cyano-7-deazaguanine + 2 NADPH + 3 H(+)</text>
        <dbReference type="Rhea" id="RHEA:13409"/>
        <dbReference type="ChEBI" id="CHEBI:15378"/>
        <dbReference type="ChEBI" id="CHEBI:45075"/>
        <dbReference type="ChEBI" id="CHEBI:57783"/>
        <dbReference type="ChEBI" id="CHEBI:58349"/>
        <dbReference type="ChEBI" id="CHEBI:58703"/>
        <dbReference type="EC" id="1.7.1.13"/>
    </reaction>
</comment>
<comment type="pathway">
    <text evidence="1">tRNA modification; tRNA-queuosine biosynthesis.</text>
</comment>
<comment type="subcellular location">
    <subcellularLocation>
        <location evidence="1">Cytoplasm</location>
    </subcellularLocation>
</comment>
<comment type="similarity">
    <text evidence="1">Belongs to the GTP cyclohydrolase I family. QueF type 1 subfamily.</text>
</comment>
<feature type="chain" id="PRO_1000062399" description="NADPH-dependent 7-cyano-7-deazaguanine reductase">
    <location>
        <begin position="1"/>
        <end position="155"/>
    </location>
</feature>
<feature type="active site" description="Thioimide intermediate" evidence="1">
    <location>
        <position position="53"/>
    </location>
</feature>
<feature type="active site" description="Proton donor" evidence="1">
    <location>
        <position position="60"/>
    </location>
</feature>
<feature type="binding site" evidence="1">
    <location>
        <begin position="75"/>
        <end position="77"/>
    </location>
    <ligand>
        <name>substrate</name>
    </ligand>
</feature>
<feature type="binding site" evidence="1">
    <location>
        <begin position="94"/>
        <end position="95"/>
    </location>
    <ligand>
        <name>substrate</name>
    </ligand>
</feature>
<accession>A6X0G9</accession>
<dbReference type="EC" id="1.7.1.13" evidence="1"/>
<dbReference type="EMBL" id="CP000758">
    <property type="protein sequence ID" value="ABS14723.1"/>
    <property type="molecule type" value="Genomic_DNA"/>
</dbReference>
<dbReference type="RefSeq" id="WP_012091934.1">
    <property type="nucleotide sequence ID" value="NC_009667.1"/>
</dbReference>
<dbReference type="SMR" id="A6X0G9"/>
<dbReference type="STRING" id="439375.Oant_2007"/>
<dbReference type="KEGG" id="oan:Oant_2007"/>
<dbReference type="eggNOG" id="COG0780">
    <property type="taxonomic scope" value="Bacteria"/>
</dbReference>
<dbReference type="HOGENOM" id="CLU_102489_0_1_5"/>
<dbReference type="PhylomeDB" id="A6X0G9"/>
<dbReference type="UniPathway" id="UPA00392"/>
<dbReference type="Proteomes" id="UP000002301">
    <property type="component" value="Chromosome 1"/>
</dbReference>
<dbReference type="GO" id="GO:0005737">
    <property type="term" value="C:cytoplasm"/>
    <property type="evidence" value="ECO:0007669"/>
    <property type="project" value="UniProtKB-SubCell"/>
</dbReference>
<dbReference type="GO" id="GO:0033739">
    <property type="term" value="F:preQ1 synthase activity"/>
    <property type="evidence" value="ECO:0007669"/>
    <property type="project" value="UniProtKB-UniRule"/>
</dbReference>
<dbReference type="GO" id="GO:0008616">
    <property type="term" value="P:queuosine biosynthetic process"/>
    <property type="evidence" value="ECO:0007669"/>
    <property type="project" value="UniProtKB-UniRule"/>
</dbReference>
<dbReference type="GO" id="GO:0006400">
    <property type="term" value="P:tRNA modification"/>
    <property type="evidence" value="ECO:0007669"/>
    <property type="project" value="UniProtKB-UniRule"/>
</dbReference>
<dbReference type="Gene3D" id="3.30.1130.10">
    <property type="match status" value="1"/>
</dbReference>
<dbReference type="HAMAP" id="MF_00818">
    <property type="entry name" value="QueF_type1"/>
    <property type="match status" value="1"/>
</dbReference>
<dbReference type="InterPro" id="IPR043133">
    <property type="entry name" value="GTP-CH-I_C/QueF"/>
</dbReference>
<dbReference type="InterPro" id="IPR050084">
    <property type="entry name" value="NADPH_dep_7-cyano-7-deazaG_red"/>
</dbReference>
<dbReference type="InterPro" id="IPR029500">
    <property type="entry name" value="QueF"/>
</dbReference>
<dbReference type="InterPro" id="IPR016856">
    <property type="entry name" value="QueF_type1"/>
</dbReference>
<dbReference type="NCBIfam" id="TIGR03139">
    <property type="entry name" value="QueF-II"/>
    <property type="match status" value="1"/>
</dbReference>
<dbReference type="PANTHER" id="PTHR34354">
    <property type="entry name" value="NADPH-DEPENDENT 7-CYANO-7-DEAZAGUANINE REDUCTASE"/>
    <property type="match status" value="1"/>
</dbReference>
<dbReference type="PANTHER" id="PTHR34354:SF1">
    <property type="entry name" value="NADPH-DEPENDENT 7-CYANO-7-DEAZAGUANINE REDUCTASE"/>
    <property type="match status" value="1"/>
</dbReference>
<dbReference type="Pfam" id="PF14489">
    <property type="entry name" value="QueF"/>
    <property type="match status" value="1"/>
</dbReference>
<dbReference type="PIRSF" id="PIRSF027377">
    <property type="entry name" value="Nitrile_oxidored_QueF"/>
    <property type="match status" value="1"/>
</dbReference>
<dbReference type="SUPFAM" id="SSF55620">
    <property type="entry name" value="Tetrahydrobiopterin biosynthesis enzymes-like"/>
    <property type="match status" value="1"/>
</dbReference>
<gene>
    <name evidence="1" type="primary">queF</name>
    <name type="ordered locus">Oant_2007</name>
</gene>
<evidence type="ECO:0000255" key="1">
    <source>
        <dbReference type="HAMAP-Rule" id="MF_00818"/>
    </source>
</evidence>